<reference key="1">
    <citation type="submission" date="2005-04" db="EMBL/GenBank/DDBJ databases">
        <authorList>
            <consortium name="NIH - Zebrafish Gene Collection (ZGC) project"/>
        </authorList>
    </citation>
    <scope>NUCLEOTIDE SEQUENCE [LARGE SCALE MRNA]</scope>
    <source>
        <tissue>Embryo</tissue>
    </source>
</reference>
<reference key="2">
    <citation type="journal article" date="2008" name="Proc. Natl. Acad. Sci. U.S.A.">
        <title>Evolutionarily conserved gene family important for fat storage.</title>
        <authorList>
            <person name="Kadereit B."/>
            <person name="Kumar P."/>
            <person name="Wang W.-J."/>
            <person name="Miranda D."/>
            <person name="Snapp E.L."/>
            <person name="Severina N."/>
            <person name="Torregroza I."/>
            <person name="Evans T."/>
            <person name="Silver D.L."/>
        </authorList>
    </citation>
    <scope>FUNCTION</scope>
    <scope>TISSUE SPECIFICITY</scope>
</reference>
<comment type="function">
    <text evidence="2 3">Fatty acyl-coenzyme A (CoA) diphosphatase that hydrolyzes fatty acyl-CoA to yield acyl-4'-phosphopantetheine and adenosine 3',5'-bisphosphate (By similarity). Preferentially hydrolyzes unsaturated long-chain acyl-CoA substrates in the endoplasmic reticulum (ER) lumen (By similarity). This catalytic activity is required for maintaining ER structure and for lipid droplets (LDs) biogenesis, which are lipid storage organelles involved in maintaining lipid and energy homeostasis (By similarity) (PubMed:18160536). Required for lipid droplet accumulation in liver and intestine during embryogenesis (PubMed:18160536). May directly bind to diacylglycerol (DAGs) and triacylglycerol, which is also important for LD biogenesis (By similarity). May support directional budding of nacent LDs from the ER into the cytosol by reducing DAG levels at sites of LD formation (By similarity). May play a role in the regulation of cell morphology, ER morphology and cytoskeletal organization (By similarity).</text>
</comment>
<comment type="catalytic activity">
    <reaction evidence="2">
        <text>an acyl-CoA + H2O = an acyl-4'-phosphopantetheine + adenosine 3',5'-bisphosphate + 2 H(+)</text>
        <dbReference type="Rhea" id="RHEA:50044"/>
        <dbReference type="ChEBI" id="CHEBI:15377"/>
        <dbReference type="ChEBI" id="CHEBI:15378"/>
        <dbReference type="ChEBI" id="CHEBI:58342"/>
        <dbReference type="ChEBI" id="CHEBI:58343"/>
        <dbReference type="ChEBI" id="CHEBI:132023"/>
    </reaction>
    <physiologicalReaction direction="left-to-right" evidence="2">
        <dbReference type="Rhea" id="RHEA:50045"/>
    </physiologicalReaction>
</comment>
<comment type="subcellular location">
    <subcellularLocation>
        <location evidence="2">Endoplasmic reticulum membrane</location>
        <topology evidence="2">Multi-pass membrane protein</topology>
    </subcellularLocation>
</comment>
<comment type="tissue specificity">
    <text evidence="3">Widely expressed.</text>
</comment>
<comment type="similarity">
    <text evidence="2">Belongs to the FIT family. FIT2 subfamily.</text>
</comment>
<sequence length="252" mass="28972">MAAAVAGSLVDKLVCLWRQPYTRIYLPHLFFCISLVGSVLKNAELVPESYFSSSRNVLNLYFVKVSWGWTIVLLLPFIAYSNFYIKSHMFALRRLTSLLVATLVWYICTETFFYIEDITGSCYESNTMVVIRGEFDTKAACRKAGFFWDGFDISGHSFILSYSSLVIMEEMVPMLHIQPAYRNPPLDCLYLALNVIVAIWIWMFGCTSVYFHDIIDKILGTSCGILGWYMTYKVWYVKLFSPGLPPQPKQHT</sequence>
<protein>
    <recommendedName>
        <fullName evidence="2">Acyl-coenzyme A diphosphatase FITM2</fullName>
        <ecNumber evidence="2">3.6.1.-</ecNumber>
    </recommendedName>
    <alternativeName>
        <fullName evidence="2">Fat storage-inducing transmembrane protein 2</fullName>
    </alternativeName>
    <alternativeName>
        <fullName evidence="2">Fat-inducing protein 2</fullName>
    </alternativeName>
</protein>
<keyword id="KW-0256">Endoplasmic reticulum</keyword>
<keyword id="KW-0378">Hydrolase</keyword>
<keyword id="KW-0443">Lipid metabolism</keyword>
<keyword id="KW-0472">Membrane</keyword>
<keyword id="KW-1185">Reference proteome</keyword>
<keyword id="KW-0812">Transmembrane</keyword>
<keyword id="KW-1133">Transmembrane helix</keyword>
<gene>
    <name evidence="2" type="primary">fitm2</name>
    <name evidence="2" type="synonym">fit2</name>
    <name type="ORF">zgc:110840</name>
</gene>
<accession>Q52KL1</accession>
<accession>A8KBW3</accession>
<organism>
    <name type="scientific">Danio rerio</name>
    <name type="common">Zebrafish</name>
    <name type="synonym">Brachydanio rerio</name>
    <dbReference type="NCBI Taxonomy" id="7955"/>
    <lineage>
        <taxon>Eukaryota</taxon>
        <taxon>Metazoa</taxon>
        <taxon>Chordata</taxon>
        <taxon>Craniata</taxon>
        <taxon>Vertebrata</taxon>
        <taxon>Euteleostomi</taxon>
        <taxon>Actinopterygii</taxon>
        <taxon>Neopterygii</taxon>
        <taxon>Teleostei</taxon>
        <taxon>Ostariophysi</taxon>
        <taxon>Cypriniformes</taxon>
        <taxon>Danionidae</taxon>
        <taxon>Danioninae</taxon>
        <taxon>Danio</taxon>
    </lineage>
</organism>
<name>FITM2_DANRE</name>
<proteinExistence type="evidence at transcript level"/>
<evidence type="ECO:0000255" key="1"/>
<evidence type="ECO:0000255" key="2">
    <source>
        <dbReference type="HAMAP-Rule" id="MF_03230"/>
    </source>
</evidence>
<evidence type="ECO:0000269" key="3">
    <source>
    </source>
</evidence>
<evidence type="ECO:0000305" key="4"/>
<feature type="chain" id="PRO_0000350634" description="Acyl-coenzyme A diphosphatase FITM2">
    <location>
        <begin position="1"/>
        <end position="252"/>
    </location>
</feature>
<feature type="topological domain" description="Cytoplasmic" evidence="4">
    <location>
        <begin position="1"/>
        <end position="25"/>
    </location>
</feature>
<feature type="transmembrane region" description="Helical" evidence="1">
    <location>
        <begin position="26"/>
        <end position="46"/>
    </location>
</feature>
<feature type="topological domain" description="Lumenal" evidence="4">
    <location>
        <begin position="47"/>
        <end position="59"/>
    </location>
</feature>
<feature type="transmembrane region" description="Helical" evidence="1">
    <location>
        <begin position="60"/>
        <end position="80"/>
    </location>
</feature>
<feature type="topological domain" description="Cytoplasmic" evidence="4">
    <location>
        <begin position="81"/>
        <end position="94"/>
    </location>
</feature>
<feature type="transmembrane region" description="Helical" evidence="1">
    <location>
        <begin position="95"/>
        <end position="115"/>
    </location>
</feature>
<feature type="topological domain" description="Lumenal" evidence="4">
    <location>
        <begin position="116"/>
        <end position="156"/>
    </location>
</feature>
<feature type="transmembrane region" description="Helical" evidence="1">
    <location>
        <begin position="157"/>
        <end position="177"/>
    </location>
</feature>
<feature type="topological domain" description="Cytoplasmic" evidence="4">
    <location>
        <begin position="178"/>
        <end position="190"/>
    </location>
</feature>
<feature type="transmembrane region" description="Helical" evidence="1">
    <location>
        <begin position="191"/>
        <end position="211"/>
    </location>
</feature>
<feature type="topological domain" description="Lumenal" evidence="4">
    <location>
        <begin position="212"/>
        <end position="223"/>
    </location>
</feature>
<feature type="transmembrane region" description="Helical" evidence="1">
    <location>
        <begin position="224"/>
        <end position="244"/>
    </location>
</feature>
<feature type="topological domain" description="Cytoplasmic" evidence="4">
    <location>
        <begin position="245"/>
        <end position="252"/>
    </location>
</feature>
<feature type="active site" evidence="2">
    <location>
        <position position="156"/>
    </location>
</feature>
<feature type="active site" evidence="2">
    <location>
        <position position="212"/>
    </location>
</feature>
<feature type="sequence conflict" description="In Ref. 1; AAI54268." evidence="4" ref="1">
    <original>V</original>
    <variation>L</variation>
    <location>
        <position position="237"/>
    </location>
</feature>
<dbReference type="EC" id="3.6.1.-" evidence="2"/>
<dbReference type="EMBL" id="BC094293">
    <property type="protein sequence ID" value="AAH94293.1"/>
    <property type="molecule type" value="mRNA"/>
</dbReference>
<dbReference type="EMBL" id="BC154267">
    <property type="protein sequence ID" value="AAI54268.1"/>
    <property type="molecule type" value="mRNA"/>
</dbReference>
<dbReference type="RefSeq" id="NP_001018334.1">
    <property type="nucleotide sequence ID" value="NM_001020498.1"/>
</dbReference>
<dbReference type="FunCoup" id="Q52KL1">
    <property type="interactions" value="1165"/>
</dbReference>
<dbReference type="STRING" id="7955.ENSDARP00000041832"/>
<dbReference type="PaxDb" id="7955-ENSDARP00000041832"/>
<dbReference type="GeneID" id="552928"/>
<dbReference type="KEGG" id="dre:552928"/>
<dbReference type="AGR" id="ZFIN:ZDB-GENE-050508-5"/>
<dbReference type="CTD" id="128486"/>
<dbReference type="ZFIN" id="ZDB-GENE-050508-5">
    <property type="gene designation" value="fitm2"/>
</dbReference>
<dbReference type="eggNOG" id="KOG3750">
    <property type="taxonomic scope" value="Eukaryota"/>
</dbReference>
<dbReference type="InParanoid" id="Q52KL1"/>
<dbReference type="OrthoDB" id="5579088at2759"/>
<dbReference type="PhylomeDB" id="Q52KL1"/>
<dbReference type="Reactome" id="R-DRE-8964572">
    <property type="pathway name" value="Lipid particle organization"/>
</dbReference>
<dbReference type="PRO" id="PR:Q52KL1"/>
<dbReference type="Proteomes" id="UP000000437">
    <property type="component" value="Alternate scaffold 23"/>
</dbReference>
<dbReference type="Proteomes" id="UP000000437">
    <property type="component" value="Chromosome 23"/>
</dbReference>
<dbReference type="GO" id="GO:0005789">
    <property type="term" value="C:endoplasmic reticulum membrane"/>
    <property type="evidence" value="ECO:0000318"/>
    <property type="project" value="GO_Central"/>
</dbReference>
<dbReference type="GO" id="GO:0010945">
    <property type="term" value="F:coenzyme A diphosphatase activity"/>
    <property type="evidence" value="ECO:0000250"/>
    <property type="project" value="UniProtKB"/>
</dbReference>
<dbReference type="GO" id="GO:0019992">
    <property type="term" value="F:diacylglycerol binding"/>
    <property type="evidence" value="ECO:0000250"/>
    <property type="project" value="UniProtKB"/>
</dbReference>
<dbReference type="GO" id="GO:0017129">
    <property type="term" value="F:triglyceride binding"/>
    <property type="evidence" value="ECO:0000250"/>
    <property type="project" value="UniProtKB"/>
</dbReference>
<dbReference type="GO" id="GO:0007010">
    <property type="term" value="P:cytoskeleton organization"/>
    <property type="evidence" value="ECO:0000250"/>
    <property type="project" value="UniProtKB"/>
</dbReference>
<dbReference type="GO" id="GO:0031018">
    <property type="term" value="P:endocrine pancreas development"/>
    <property type="evidence" value="ECO:0000315"/>
    <property type="project" value="ZFIN"/>
</dbReference>
<dbReference type="GO" id="GO:0036115">
    <property type="term" value="P:fatty-acyl-CoA catabolic process"/>
    <property type="evidence" value="ECO:0000250"/>
    <property type="project" value="UniProtKB"/>
</dbReference>
<dbReference type="GO" id="GO:0042593">
    <property type="term" value="P:glucose homeostasis"/>
    <property type="evidence" value="ECO:0000315"/>
    <property type="project" value="ZFIN"/>
</dbReference>
<dbReference type="GO" id="GO:0140042">
    <property type="term" value="P:lipid droplet formation"/>
    <property type="evidence" value="ECO:0000250"/>
    <property type="project" value="UniProtKB"/>
</dbReference>
<dbReference type="GO" id="GO:0034389">
    <property type="term" value="P:lipid droplet organization"/>
    <property type="evidence" value="ECO:0000318"/>
    <property type="project" value="GO_Central"/>
</dbReference>
<dbReference type="GO" id="GO:0055088">
    <property type="term" value="P:lipid homeostasis"/>
    <property type="evidence" value="ECO:0000250"/>
    <property type="project" value="UniProtKB"/>
</dbReference>
<dbReference type="GO" id="GO:0019915">
    <property type="term" value="P:lipid storage"/>
    <property type="evidence" value="ECO:0000315"/>
    <property type="project" value="ZFIN"/>
</dbReference>
<dbReference type="GO" id="GO:1990798">
    <property type="term" value="P:pancreas regeneration"/>
    <property type="evidence" value="ECO:0000315"/>
    <property type="project" value="ZFIN"/>
</dbReference>
<dbReference type="GO" id="GO:0008654">
    <property type="term" value="P:phospholipid biosynthetic process"/>
    <property type="evidence" value="ECO:0000318"/>
    <property type="project" value="GO_Central"/>
</dbReference>
<dbReference type="GO" id="GO:0022604">
    <property type="term" value="P:regulation of cell morphogenesis"/>
    <property type="evidence" value="ECO:0000250"/>
    <property type="project" value="UniProtKB"/>
</dbReference>
<dbReference type="GO" id="GO:0003323">
    <property type="term" value="P:type B pancreatic cell development"/>
    <property type="evidence" value="ECO:0000315"/>
    <property type="project" value="ZFIN"/>
</dbReference>
<dbReference type="HAMAP" id="MF_03230">
    <property type="entry name" value="FITM2"/>
    <property type="match status" value="1"/>
</dbReference>
<dbReference type="InterPro" id="IPR019388">
    <property type="entry name" value="FIT"/>
</dbReference>
<dbReference type="InterPro" id="IPR046401">
    <property type="entry name" value="FITM1/2"/>
</dbReference>
<dbReference type="PANTHER" id="PTHR23129">
    <property type="entry name" value="ACYL-COENZYME A DIPHOSPHATASE FITM2"/>
    <property type="match status" value="1"/>
</dbReference>
<dbReference type="PANTHER" id="PTHR23129:SF1">
    <property type="entry name" value="ACYL-COENZYME A DIPHOSPHATASE FITM2"/>
    <property type="match status" value="1"/>
</dbReference>
<dbReference type="Pfam" id="PF10261">
    <property type="entry name" value="FIT"/>
    <property type="match status" value="2"/>
</dbReference>